<feature type="signal peptide" evidence="6">
    <location>
        <begin position="1"/>
        <end position="23"/>
    </location>
</feature>
<feature type="propeptide" id="PRO_0000236222" evidence="6">
    <location>
        <begin position="24"/>
        <end position="154"/>
    </location>
</feature>
<feature type="chain" id="PRO_0000236223" description="Cadherin-1">
    <location>
        <begin position="155"/>
        <end position="882"/>
    </location>
</feature>
<feature type="chain" id="PRO_0000236224" description="E-Cad/CTF1" evidence="1">
    <location>
        <begin position="701"/>
        <end position="882"/>
    </location>
</feature>
<feature type="chain" id="PRO_0000236225" description="E-Cad/CTF2" evidence="1">
    <location>
        <begin position="732"/>
        <end position="882"/>
    </location>
</feature>
<feature type="chain" id="PRO_0000236226" description="E-Cad/CTF3" evidence="1">
    <location>
        <begin position="751"/>
        <end position="882"/>
    </location>
</feature>
<feature type="topological domain" description="Extracellular" evidence="6">
    <location>
        <begin position="155"/>
        <end position="709"/>
    </location>
</feature>
<feature type="transmembrane region" description="Helical" evidence="6">
    <location>
        <begin position="710"/>
        <end position="730"/>
    </location>
</feature>
<feature type="topological domain" description="Cytoplasmic" evidence="6">
    <location>
        <begin position="731"/>
        <end position="882"/>
    </location>
</feature>
<feature type="domain" description="Cadherin 1" evidence="7">
    <location>
        <begin position="154"/>
        <end position="262"/>
    </location>
</feature>
<feature type="domain" description="Cadherin 2" evidence="7">
    <location>
        <begin position="263"/>
        <end position="375"/>
    </location>
</feature>
<feature type="domain" description="Cadherin 3" evidence="7">
    <location>
        <begin position="376"/>
        <end position="486"/>
    </location>
</feature>
<feature type="domain" description="Cadherin 4" evidence="7">
    <location>
        <begin position="487"/>
        <end position="595"/>
    </location>
</feature>
<feature type="domain" description="Cadherin 5" evidence="7">
    <location>
        <begin position="594"/>
        <end position="702"/>
    </location>
</feature>
<feature type="region of interest" description="Disordered" evidence="8">
    <location>
        <begin position="117"/>
        <end position="137"/>
    </location>
</feature>
<feature type="region of interest" description="Disordered" evidence="8">
    <location>
        <begin position="747"/>
        <end position="767"/>
    </location>
</feature>
<feature type="region of interest" description="Required for binding CTNND1 and PSEN1" evidence="1">
    <location>
        <begin position="758"/>
        <end position="769"/>
    </location>
</feature>
<feature type="region of interest" description="Required for binding alpha, beta and gamma catenins" evidence="1">
    <location>
        <begin position="811"/>
        <end position="882"/>
    </location>
</feature>
<feature type="compositionally biased region" description="Acidic residues" evidence="8">
    <location>
        <begin position="755"/>
        <end position="767"/>
    </location>
</feature>
<feature type="site" description="Cleavage; by a metalloproteinase" evidence="1">
    <location>
        <begin position="700"/>
        <end position="701"/>
    </location>
</feature>
<feature type="site" description="Cleavage; by gamma-secretase/PS1" evidence="1">
    <location>
        <begin position="731"/>
        <end position="732"/>
    </location>
</feature>
<feature type="site" description="Cleavage; by caspase-3" evidence="1">
    <location>
        <begin position="750"/>
        <end position="751"/>
    </location>
</feature>
<feature type="modified residue" description="Phosphotyrosine; by SRC" evidence="4">
    <location>
        <position position="753"/>
    </location>
</feature>
<feature type="modified residue" description="Phosphotyrosine; by SRC" evidence="4">
    <location>
        <position position="754"/>
    </location>
</feature>
<feature type="modified residue" description="Phosphotyrosine; by SRC" evidence="4">
    <location>
        <position position="755"/>
    </location>
</feature>
<feature type="modified residue" description="Phosphoserine" evidence="4">
    <location>
        <position position="770"/>
    </location>
</feature>
<feature type="modified residue" description="Phosphoserine" evidence="4">
    <location>
        <position position="793"/>
    </location>
</feature>
<feature type="modified residue" description="Phosphoserine" evidence="3">
    <location>
        <position position="838"/>
    </location>
</feature>
<feature type="modified residue" description="Phosphoserine" evidence="3">
    <location>
        <position position="840"/>
    </location>
</feature>
<feature type="modified residue" description="Phosphoserine" evidence="3">
    <location>
        <position position="846"/>
    </location>
</feature>
<feature type="glycosylation site" description="O-linked (Man...) serine" evidence="3">
    <location>
        <position position="280"/>
    </location>
</feature>
<feature type="glycosylation site" description="O-linked (Man...) threonine" evidence="3">
    <location>
        <position position="285"/>
    </location>
</feature>
<feature type="glycosylation site" description="O-linked (Man...) threonine" evidence="3">
    <location>
        <position position="358"/>
    </location>
</feature>
<feature type="glycosylation site" description="O-linked (Man...) threonine" evidence="3">
    <location>
        <position position="470"/>
    </location>
</feature>
<feature type="glycosylation site" description="O-linked (Man...) threonine" evidence="3">
    <location>
        <position position="472"/>
    </location>
</feature>
<feature type="glycosylation site" description="O-linked (Man...) threonine" evidence="3">
    <location>
        <position position="509"/>
    </location>
</feature>
<feature type="glycosylation site" description="N-linked (GlcNAc...) asparagine" evidence="6">
    <location>
        <position position="558"/>
    </location>
</feature>
<feature type="glycosylation site" description="O-linked (Man...) threonine" evidence="3">
    <location>
        <position position="576"/>
    </location>
</feature>
<feature type="glycosylation site" description="O-linked (Man...) threonine" evidence="3">
    <location>
        <position position="578"/>
    </location>
</feature>
<feature type="glycosylation site" description="O-linked (Man...) threonine" evidence="3">
    <location>
        <position position="580"/>
    </location>
</feature>
<feature type="glycosylation site" description="N-linked (GlcNAc...) asparagine" evidence="6">
    <location>
        <position position="637"/>
    </location>
</feature>
<feature type="disulfide bond" description="Interchain" evidence="1">
    <location>
        <position position="163"/>
    </location>
</feature>
<name>CADH1_BOVIN</name>
<reference key="1">
    <citation type="submission" date="2003-12" db="EMBL/GenBank/DDBJ databases">
        <title>Sequence of Bos taurus e-cadherin (CDH1) mRNA.</title>
        <authorList>
            <person name="Hanna C.B."/>
            <person name="Cox M.L."/>
            <person name="Golding M.C."/>
            <person name="Westhusin M.E."/>
            <person name="Kraemer D.C."/>
        </authorList>
    </citation>
    <scope>NUCLEOTIDE SEQUENCE [MRNA]</scope>
</reference>
<proteinExistence type="evidence at transcript level"/>
<dbReference type="EMBL" id="AY508164">
    <property type="protein sequence ID" value="AAR91598.1"/>
    <property type="molecule type" value="mRNA"/>
</dbReference>
<dbReference type="RefSeq" id="NP_001002763.1">
    <property type="nucleotide sequence ID" value="NM_001002763.1"/>
</dbReference>
<dbReference type="SMR" id="Q6R8F2"/>
<dbReference type="FunCoup" id="Q6R8F2">
    <property type="interactions" value="443"/>
</dbReference>
<dbReference type="STRING" id="9913.ENSBTAP00000073179"/>
<dbReference type="GlyCosmos" id="Q6R8F2">
    <property type="glycosylation" value="11 sites, No reported glycans"/>
</dbReference>
<dbReference type="GlyGen" id="Q6R8F2">
    <property type="glycosylation" value="11 sites"/>
</dbReference>
<dbReference type="PaxDb" id="9913-ENSBTAP00000021272"/>
<dbReference type="PeptideAtlas" id="Q6R8F2"/>
<dbReference type="GeneID" id="282637"/>
<dbReference type="KEGG" id="bta:282637"/>
<dbReference type="CTD" id="999"/>
<dbReference type="eggNOG" id="KOG3594">
    <property type="taxonomic scope" value="Eukaryota"/>
</dbReference>
<dbReference type="InParanoid" id="Q6R8F2"/>
<dbReference type="OrthoDB" id="6079678at2759"/>
<dbReference type="Proteomes" id="UP000009136">
    <property type="component" value="Unplaced"/>
</dbReference>
<dbReference type="GO" id="GO:0005912">
    <property type="term" value="C:adherens junction"/>
    <property type="evidence" value="ECO:0000250"/>
    <property type="project" value="UniProtKB"/>
</dbReference>
<dbReference type="GO" id="GO:0043296">
    <property type="term" value="C:apical junction complex"/>
    <property type="evidence" value="ECO:0000318"/>
    <property type="project" value="GO_Central"/>
</dbReference>
<dbReference type="GO" id="GO:0016342">
    <property type="term" value="C:catenin complex"/>
    <property type="evidence" value="ECO:0000318"/>
    <property type="project" value="GO_Central"/>
</dbReference>
<dbReference type="GO" id="GO:0030054">
    <property type="term" value="C:cell junction"/>
    <property type="evidence" value="ECO:0000250"/>
    <property type="project" value="UniProtKB"/>
</dbReference>
<dbReference type="GO" id="GO:0005911">
    <property type="term" value="C:cell-cell junction"/>
    <property type="evidence" value="ECO:0000250"/>
    <property type="project" value="UniProtKB"/>
</dbReference>
<dbReference type="GO" id="GO:0005737">
    <property type="term" value="C:cytoplasm"/>
    <property type="evidence" value="ECO:0000250"/>
    <property type="project" value="UniProtKB"/>
</dbReference>
<dbReference type="GO" id="GO:0030057">
    <property type="term" value="C:desmosome"/>
    <property type="evidence" value="ECO:0007669"/>
    <property type="project" value="UniProtKB-SubCell"/>
</dbReference>
<dbReference type="GO" id="GO:0005768">
    <property type="term" value="C:endosome"/>
    <property type="evidence" value="ECO:0007669"/>
    <property type="project" value="UniProtKB-SubCell"/>
</dbReference>
<dbReference type="GO" id="GO:0016600">
    <property type="term" value="C:flotillin complex"/>
    <property type="evidence" value="ECO:0000318"/>
    <property type="project" value="GO_Central"/>
</dbReference>
<dbReference type="GO" id="GO:0005794">
    <property type="term" value="C:Golgi apparatus"/>
    <property type="evidence" value="ECO:0007669"/>
    <property type="project" value="UniProtKB-SubCell"/>
</dbReference>
<dbReference type="GO" id="GO:0005886">
    <property type="term" value="C:plasma membrane"/>
    <property type="evidence" value="ECO:0000250"/>
    <property type="project" value="UniProtKB"/>
</dbReference>
<dbReference type="GO" id="GO:0008013">
    <property type="term" value="F:beta-catenin binding"/>
    <property type="evidence" value="ECO:0000318"/>
    <property type="project" value="GO_Central"/>
</dbReference>
<dbReference type="GO" id="GO:0045296">
    <property type="term" value="F:cadherin binding"/>
    <property type="evidence" value="ECO:0000318"/>
    <property type="project" value="GO_Central"/>
</dbReference>
<dbReference type="GO" id="GO:0005509">
    <property type="term" value="F:calcium ion binding"/>
    <property type="evidence" value="ECO:0007669"/>
    <property type="project" value="InterPro"/>
</dbReference>
<dbReference type="GO" id="GO:0034332">
    <property type="term" value="P:adherens junction organization"/>
    <property type="evidence" value="ECO:0000318"/>
    <property type="project" value="GO_Central"/>
</dbReference>
<dbReference type="GO" id="GO:0016339">
    <property type="term" value="P:calcium-dependent cell-cell adhesion via plasma membrane cell adhesion molecules"/>
    <property type="evidence" value="ECO:0000318"/>
    <property type="project" value="GO_Central"/>
</dbReference>
<dbReference type="GO" id="GO:0016477">
    <property type="term" value="P:cell migration"/>
    <property type="evidence" value="ECO:0000318"/>
    <property type="project" value="GO_Central"/>
</dbReference>
<dbReference type="GO" id="GO:0000902">
    <property type="term" value="P:cell morphogenesis"/>
    <property type="evidence" value="ECO:0000318"/>
    <property type="project" value="GO_Central"/>
</dbReference>
<dbReference type="GO" id="GO:0044331">
    <property type="term" value="P:cell-cell adhesion mediated by cadherin"/>
    <property type="evidence" value="ECO:0000318"/>
    <property type="project" value="GO_Central"/>
</dbReference>
<dbReference type="GO" id="GO:0007043">
    <property type="term" value="P:cell-cell junction assembly"/>
    <property type="evidence" value="ECO:0000318"/>
    <property type="project" value="GO_Central"/>
</dbReference>
<dbReference type="GO" id="GO:0002159">
    <property type="term" value="P:desmosome assembly"/>
    <property type="evidence" value="ECO:0000250"/>
    <property type="project" value="UniProtKB"/>
</dbReference>
<dbReference type="GO" id="GO:0007156">
    <property type="term" value="P:homophilic cell adhesion via plasma membrane adhesion molecules"/>
    <property type="evidence" value="ECO:0007669"/>
    <property type="project" value="InterPro"/>
</dbReference>
<dbReference type="GO" id="GO:1903829">
    <property type="term" value="P:positive regulation of protein localization"/>
    <property type="evidence" value="ECO:0000250"/>
    <property type="project" value="UniProtKB"/>
</dbReference>
<dbReference type="GO" id="GO:0010468">
    <property type="term" value="P:regulation of gene expression"/>
    <property type="evidence" value="ECO:0000250"/>
    <property type="project" value="UniProtKB"/>
</dbReference>
<dbReference type="GO" id="GO:0007416">
    <property type="term" value="P:synapse assembly"/>
    <property type="evidence" value="ECO:0000318"/>
    <property type="project" value="GO_Central"/>
</dbReference>
<dbReference type="CDD" id="cd00031">
    <property type="entry name" value="CA_like"/>
    <property type="match status" value="1"/>
</dbReference>
<dbReference type="CDD" id="cd11304">
    <property type="entry name" value="Cadherin_repeat"/>
    <property type="match status" value="3"/>
</dbReference>
<dbReference type="FunFam" id="2.60.40.60:FF:000011">
    <property type="entry name" value="Cadherin 1"/>
    <property type="match status" value="1"/>
</dbReference>
<dbReference type="FunFam" id="2.60.40.60:FF:000191">
    <property type="entry name" value="Cadherin 1"/>
    <property type="match status" value="1"/>
</dbReference>
<dbReference type="FunFam" id="2.60.40.60:FF:000019">
    <property type="entry name" value="Cadherin 2"/>
    <property type="match status" value="1"/>
</dbReference>
<dbReference type="FunFam" id="2.60.40.60:FF:000022">
    <property type="entry name" value="Cadherin 2"/>
    <property type="match status" value="1"/>
</dbReference>
<dbReference type="FunFam" id="2.60.40.60:FF:000027">
    <property type="entry name" value="Cadherin 2"/>
    <property type="match status" value="1"/>
</dbReference>
<dbReference type="FunFam" id="4.10.900.10:FF:000001">
    <property type="entry name" value="Cadherin 2"/>
    <property type="match status" value="1"/>
</dbReference>
<dbReference type="FunFam" id="2.60.40.60:FF:000031">
    <property type="entry name" value="Cadherin 3"/>
    <property type="match status" value="1"/>
</dbReference>
<dbReference type="Gene3D" id="2.60.40.60">
    <property type="entry name" value="Cadherins"/>
    <property type="match status" value="6"/>
</dbReference>
<dbReference type="Gene3D" id="4.10.900.10">
    <property type="entry name" value="TCF3-CBD (Catenin binding domain)"/>
    <property type="match status" value="1"/>
</dbReference>
<dbReference type="InterPro" id="IPR039808">
    <property type="entry name" value="Cadherin"/>
</dbReference>
<dbReference type="InterPro" id="IPR002126">
    <property type="entry name" value="Cadherin-like_dom"/>
</dbReference>
<dbReference type="InterPro" id="IPR015919">
    <property type="entry name" value="Cadherin-like_sf"/>
</dbReference>
<dbReference type="InterPro" id="IPR020894">
    <property type="entry name" value="Cadherin_CS"/>
</dbReference>
<dbReference type="InterPro" id="IPR014868">
    <property type="entry name" value="Cadherin_pro_dom"/>
</dbReference>
<dbReference type="InterPro" id="IPR000233">
    <property type="entry name" value="Cadherin_Y-type_LIR"/>
</dbReference>
<dbReference type="InterPro" id="IPR027397">
    <property type="entry name" value="Catenin-bd_sf"/>
</dbReference>
<dbReference type="PANTHER" id="PTHR24027:SF319">
    <property type="entry name" value="CADHERIN-1"/>
    <property type="match status" value="1"/>
</dbReference>
<dbReference type="PANTHER" id="PTHR24027">
    <property type="entry name" value="CADHERIN-23"/>
    <property type="match status" value="1"/>
</dbReference>
<dbReference type="Pfam" id="PF01049">
    <property type="entry name" value="CADH_Y-type_LIR"/>
    <property type="match status" value="1"/>
</dbReference>
<dbReference type="Pfam" id="PF00028">
    <property type="entry name" value="Cadherin"/>
    <property type="match status" value="5"/>
</dbReference>
<dbReference type="Pfam" id="PF08758">
    <property type="entry name" value="Cadherin_pro"/>
    <property type="match status" value="1"/>
</dbReference>
<dbReference type="PRINTS" id="PR00205">
    <property type="entry name" value="CADHERIN"/>
</dbReference>
<dbReference type="SMART" id="SM00112">
    <property type="entry name" value="CA"/>
    <property type="match status" value="4"/>
</dbReference>
<dbReference type="SMART" id="SM01055">
    <property type="entry name" value="Cadherin_pro"/>
    <property type="match status" value="1"/>
</dbReference>
<dbReference type="SUPFAM" id="SSF49313">
    <property type="entry name" value="Cadherin-like"/>
    <property type="match status" value="6"/>
</dbReference>
<dbReference type="PROSITE" id="PS00232">
    <property type="entry name" value="CADHERIN_1"/>
    <property type="match status" value="3"/>
</dbReference>
<dbReference type="PROSITE" id="PS50268">
    <property type="entry name" value="CADHERIN_2"/>
    <property type="match status" value="4"/>
</dbReference>
<evidence type="ECO:0000250" key="1"/>
<evidence type="ECO:0000250" key="2">
    <source>
        <dbReference type="UniProtKB" id="F1PAA9"/>
    </source>
</evidence>
<evidence type="ECO:0000250" key="3">
    <source>
        <dbReference type="UniProtKB" id="P09803"/>
    </source>
</evidence>
<evidence type="ECO:0000250" key="4">
    <source>
        <dbReference type="UniProtKB" id="P12830"/>
    </source>
</evidence>
<evidence type="ECO:0000250" key="5">
    <source>
        <dbReference type="UniProtKB" id="Q9R0T4"/>
    </source>
</evidence>
<evidence type="ECO:0000255" key="6"/>
<evidence type="ECO:0000255" key="7">
    <source>
        <dbReference type="PROSITE-ProRule" id="PRU00043"/>
    </source>
</evidence>
<evidence type="ECO:0000256" key="8">
    <source>
        <dbReference type="SAM" id="MobiDB-lite"/>
    </source>
</evidence>
<sequence length="882" mass="97938">MGPWSRSLSALCCCCRCNPWLCREPEPCIPGFGAESYTFTVPRRNLERGRVLGRVSFEGCAGLPRTVYVSDDTRFKVHTDGVLTVRRPVHLHRPELSFLVHAWDSTHRKLSTKVTLEVSAHHHHHHSHHDSPSGTQTEVLTFPGPHHGLRRQKRDWVIPPISCPENEKGPFPKSLVQIKSNKEKETQVFYSITGQRADTPPVGVFIIERETGWLKVTQPLDREQIAKYILFSHAVSSNGQAIEEPMEIVITVTDQNDNKPQFTQEVFKASALEGALPGTSVMQVTATDIDDEVNTYTAAIGYTIPAQDPMLPHNKMFTINKETGVISVLTTGLDRESFPTYTLMVQAADLNGEGLSTTATAVITVLDTNDNAPRFNPTTYVGSVPENEANVAITTLTVTDADDPNTPAWEAVYTVLNDNEKQFIVVTDPVTNEGTLKTAKGLDFEAKQQYILYVAVTNVAPFEVTLPTSTATVTVDVIDVNEAPIFVPPQKRVEVPEDFGVGLEITSYTAREPDTFMEQKITYRIWRDTANWLEINPETGAISTRAELDREDVDHVKNSTYTALIIATDNGSPPATGTGTLLLFLDDVNDNGPVPEPRTMDFCQRNPEPHIININDPDLPPNTSPFTAELTHGASVNWTIEYNDQERESLILKPKKTLELGDHKINLKLIDNQNKDQVTTLDVHVCDCDGIVSNCRKARPAEAGLQVPAILGILGGILAFLILILLLLLLVRRRRVVKEPLLPPEDDTRDNVYYYDEEGGGEEDQDFDLSQLHRGLDARPEVTRNDVAPTLMSVPQYRPRPANPDEIGNFIDENLKAADSDPTAPPYDSLLVFDYEGSGSEAATLSSLNSSESDQDQDYDYLNEWGNRFKKLADMYGGGEDD</sequence>
<organism>
    <name type="scientific">Bos taurus</name>
    <name type="common">Bovine</name>
    <dbReference type="NCBI Taxonomy" id="9913"/>
    <lineage>
        <taxon>Eukaryota</taxon>
        <taxon>Metazoa</taxon>
        <taxon>Chordata</taxon>
        <taxon>Craniata</taxon>
        <taxon>Vertebrata</taxon>
        <taxon>Euteleostomi</taxon>
        <taxon>Mammalia</taxon>
        <taxon>Eutheria</taxon>
        <taxon>Laurasiatheria</taxon>
        <taxon>Artiodactyla</taxon>
        <taxon>Ruminantia</taxon>
        <taxon>Pecora</taxon>
        <taxon>Bovidae</taxon>
        <taxon>Bovinae</taxon>
        <taxon>Bos</taxon>
    </lineage>
</organism>
<keyword id="KW-0106">Calcium</keyword>
<keyword id="KW-0130">Cell adhesion</keyword>
<keyword id="KW-0965">Cell junction</keyword>
<keyword id="KW-1003">Cell membrane</keyword>
<keyword id="KW-0165">Cleavage on pair of basic residues</keyword>
<keyword id="KW-0963">Cytoplasm</keyword>
<keyword id="KW-1015">Disulfide bond</keyword>
<keyword id="KW-0967">Endosome</keyword>
<keyword id="KW-0325">Glycoprotein</keyword>
<keyword id="KW-0333">Golgi apparatus</keyword>
<keyword id="KW-0472">Membrane</keyword>
<keyword id="KW-0479">Metal-binding</keyword>
<keyword id="KW-0597">Phosphoprotein</keyword>
<keyword id="KW-1185">Reference proteome</keyword>
<keyword id="KW-0677">Repeat</keyword>
<keyword id="KW-0732">Signal</keyword>
<keyword id="KW-0812">Transmembrane</keyword>
<keyword id="KW-1133">Transmembrane helix</keyword>
<keyword id="KW-0832">Ubl conjugation</keyword>
<comment type="function">
    <text evidence="2 4">Cadherins are calcium-dependent cell adhesion proteins. They preferentially interact with themselves in a homophilic manner in connecting cells; cadherins may thus contribute to the sorting of heterogeneous cell types. CDH1 is involved in mechanisms regulating cell-cell adhesions, mobility and proliferation of epithelial cells. Promotes organization of radial actin fiber structure and cellular response to contractile forces, via its interaction with AMOTL2 which facilitates anchoring of radial actin fibers to CDH1 junction complexes at the cell membrane (By similarity). Plays a role in the early stages of desmosome cell-cell junction formation via facilitating the recruitment of DSG2 and DSP to desmosome plaques (By similarity). Has a potent invasive suppressor role. It is a ligand for integrin alpha-E/beta-7.</text>
</comment>
<comment type="function">
    <text evidence="4">E-Cad/CTF2 promotes non-amyloidogenic degradation of Abeta precursors. Has a strong inhibitory effect on APP C99 and C83 production (By similarity).</text>
</comment>
<comment type="subunit">
    <text evidence="2 3 4 5">Homodimer; disulfide-linked. Component of an E-cadherin/ catenin adhesion complex composed of at least E-cadherin/CDH1, beta-catenin/CTNNB1 or gamma-catenin/JUP, and potentially alpha-catenin/CTNNA1; the complex is located to adherens junctions. Found in a complex composed of CDH1, RAP1A and PKP3; PKP3 acts as a scaffold protein within the complex, the complex is required for CDH1 localization to mature desmosome cell junctions (By similarity). Interacts with the TRPV4 and CTNNB1 complex. Interacts with CTNND1. The stable association of CTNNA1 is controversial as CTNNA1 was shown not to bind to F-actin when assembled in the complex. Alternatively, the CTNNA1-containing complex may be linked to F-actin by other proteins such as LIMA1. Interaction with PSEN1, cleaves CDH1 resulting in the disassociation of cadherin-based adherens junctions (CAJs). Interacts with AJAP1 and DLGAP5. Interacts with TBC1D2. Interacts with CAV1. Interacts with PIP5K1C. Interacts with RAB8B. Interacts with DDR1; this stabilizes CDH1 at the cell surface and inhibits its internalization. Interacts with RAPGEF2. Interacts with KLRG1. Forms a ternary complex composed of ADAM10, CADH1 and EPHA4; within the complex, CADH1 is cleaved by ADAM10 which disrupts adherens junctions (By similarity). Interacts with SPEF1 (By similarity). Interacts with CTNNB1 and PKP2 (By similarity). Interacts with AMOTL2; the interaction may facilitate binding of radial actin fibers to cell junction complexes (By similarity). Interacts with DSG3; the interaction is required for CDH1 localization to developing adherens junctions (By similarity).</text>
</comment>
<comment type="subcellular location">
    <subcellularLocation>
        <location evidence="4">Cell junction</location>
        <location evidence="4">Adherens junction</location>
    </subcellularLocation>
    <subcellularLocation>
        <location evidence="4">Cell membrane</location>
        <topology evidence="1">Single-pass type I membrane protein</topology>
    </subcellularLocation>
    <subcellularLocation>
        <location evidence="4">Endosome</location>
    </subcellularLocation>
    <subcellularLocation>
        <location evidence="4">Golgi apparatus</location>
        <location evidence="4">trans-Golgi network</location>
    </subcellularLocation>
    <subcellularLocation>
        <location evidence="3">Cytoplasm</location>
    </subcellularLocation>
    <subcellularLocation>
        <location evidence="4">Cell junction</location>
        <location evidence="4">Desmosome</location>
    </subcellularLocation>
    <text evidence="1 3 4">Colocalizes with DLGAP5 at sites of cell-cell contact in intestinal epithelial cells. Anchored to actin microfilaments through association with alpha-, beta- and gamma-catenin. Sequential proteolysis induced by apoptosis or calcium influx, results in translocation from sites of cell-cell contact to the cytoplasm (By similarity). Colocalizes with RAB11A endosomes during its transport from the Golgi apparatus to the plasma membrane (By similarity). Recruited to desmosomes at the initial assembly phase and also accumulates progressively at mature desmosome cell-cell junctions (By similarity). Localizes to cell-cell contacts as keratinocyte differentiation progresses (By similarity).</text>
</comment>
<comment type="domain">
    <text evidence="4">Three calcium ions are usually bound at the interface of each cadherin domain and strengthen the connections, imparting a strong curvature to the full-length ectodomain.</text>
</comment>
<comment type="PTM">
    <text evidence="3 4">During apoptosis or with calcium influx, cleaved by a membrane-bound metalloproteinase (ADAM10), PS1/gamma-secretase and caspase-3 (By similarity). Processing by the metalloproteinase, induced by calcium influx, causes disruption of cell-cell adhesion and the subsequent release of beta-catenin into the cytoplasm (By similarity). The residual membrane-tethered cleavage product is rapidly degraded via an intracellular proteolytic pathway (By similarity). Cleavage by caspase-3 releases the cytoplasmic tail resulting in disintegration of the actin microfilament system (By similarity). The gamma-secretase-mediated cleavage promotes disassembly of adherens junctions (By similarity). During development of the cochlear organ of Corti, cleavage by ADAM10 at adherens junctions promotes pillar cell separation (By similarity).</text>
</comment>
<comment type="PTM">
    <text evidence="1 4">N-glycosylation at Asn-637 is essential for expression, folding and trafficking. Addition of bisecting N-acetylglucosamine by MGAT3 modulates its cell membrane location (By similarity).</text>
</comment>
<comment type="PTM">
    <text evidence="1">Ubiquitinated by a SCF complex containing SKP2, which requires prior phosphorylation by CK1/CSNK1A1. Ubiquitinated by CBLL1/HAKAI, requires prior phosphorylation at Tyr-754 (By similarity).</text>
</comment>
<comment type="PTM">
    <text evidence="3">O-glycosylated. O-manosylated by TMTC1, TMTC2, TMTC3 or TMTC4. Thr-285 and Thr-509 are O-mannosylated by TMTC2 or TMTC4 but not TMTC1 or TMTC3.</text>
</comment>
<gene>
    <name type="primary">CDH1</name>
</gene>
<protein>
    <recommendedName>
        <fullName>Cadherin-1</fullName>
    </recommendedName>
    <alternativeName>
        <fullName>Epithelial cadherin</fullName>
        <shortName>E-cadherin</shortName>
    </alternativeName>
    <cdAntigenName>CD324</cdAntigenName>
    <component>
        <recommendedName>
            <fullName>E-Cad/CTF1</fullName>
        </recommendedName>
    </component>
    <component>
        <recommendedName>
            <fullName>E-Cad/CTF2</fullName>
        </recommendedName>
    </component>
    <component>
        <recommendedName>
            <fullName>E-Cad/CTF3</fullName>
        </recommendedName>
    </component>
</protein>
<accession>Q6R8F2</accession>